<organism>
    <name type="scientific">Candida albicans</name>
    <name type="common">Yeast</name>
    <dbReference type="NCBI Taxonomy" id="5476"/>
    <lineage>
        <taxon>Eukaryota</taxon>
        <taxon>Fungi</taxon>
        <taxon>Dikarya</taxon>
        <taxon>Ascomycota</taxon>
        <taxon>Saccharomycotina</taxon>
        <taxon>Pichiomycetes</taxon>
        <taxon>Debaryomycetaceae</taxon>
        <taxon>Candida/Lodderomyces clade</taxon>
        <taxon>Candida</taxon>
    </lineage>
</organism>
<sequence length="987" mass="108598">MPSSSDAINRISYISLVTSDNDKFNQTFQFYSQLGFRLTKSFSKVSSYGSGLGANHPEFQLGVSHDSLKEVWLESYPLQNVDSNGNLRPWQEMEVYDGDNCERLNESTVIKVRLLGETPLKSISQKQFVFFTTQLNKIEKILTDANVKYGKVVDNVILAEDPLNNIISFSNTQNELCKTRFQSPEEYVEKTTAEILAKRKKSQLGSKFGSFEEISPSEVGGGNGLRKKKIGVMTSGGDAPGMNPAVRAVVRAGIYYGCDVYAVYEGYEGLVKGGDLLKKMEWSDVRSYMSLGGTSIGTARCKEFRERAGRLQGAYNMIKNGIDALVVCGGDGSLTGADLFRSEWPSLVKELVDTGKLTKEEVSPYEHLTIVGLVGSIDNDMSGTDVTIGAFSALERITEMVDYIGATAASHSRAFVVEVMGRHCGWLALLSGLATGADFVFIPERPPKAGLWKEQLKEVCLRHREYGRRKTTVIVAEGAIDDELNPITSEEVKQVLADLGLDTRNTILGHVQRGGTAVAFDRRLATLQGVEAVKAVLEMTPDTPSPMIGILKHKIVRIPLVDAVKQTKAVAEAISNKDFDKAMSLRDNSFYDDYRYFRDISIYDDGSKQLSEDKRLNIAIVHVGAASAGLNAATRAVALYSLSRGHKLYAVQDGFAGLVKGDLKNLTWMDVEGWHSLGGSEIGTNRSLPSQNIGKVAYNLQKFNIQGLLIVGGFEAFTSLHELSEQKANYPIFEIPMVVVPATVSNNVPGTEYSLGADTCLNQLVSYCDAVQQSASSTRRRVFVVEVQGGHSGYVASYCGLITGALATYTPESNINLRELQGDIDLLQKVFATDRGEDHNGTLIVRNEQASAVYSTQLIADILKENANKRFETRTAIPGHVQQGFTPSANDRVMAVKFSLKAMEFIETRNGCYGKHDRKFSDEEISEHSQVVIGIHGDVVKFTCIKHLYDNEANVALRKGKTVHWTDMIDVANILNGKSLLKKQERY</sequence>
<reference key="1">
    <citation type="journal article" date="1999" name="Eur. J. Biochem.">
        <title>Genetic and biochemical characterization of phosphofructokinase from the opportunistic pathogenic yeast Candida albicans.</title>
        <authorList>
            <person name="Lorberg A."/>
            <person name="Kirchrath L."/>
            <person name="Ernst J.F."/>
            <person name="Heinisch J.J."/>
        </authorList>
    </citation>
    <scope>NUCLEOTIDE SEQUENCE [GENOMIC DNA]</scope>
    <scope>CHARACTERIZATION</scope>
    <source>
        <strain>ATCC 10231 / CBS 6431 / CIP 48.72 / DSM 1386 / NBRC 1594</strain>
    </source>
</reference>
<evidence type="ECO:0000255" key="1">
    <source>
        <dbReference type="HAMAP-Rule" id="MF_03184"/>
    </source>
</evidence>
<dbReference type="EC" id="2.7.1.11" evidence="1"/>
<dbReference type="EMBL" id="AJ007638">
    <property type="protein sequence ID" value="CAB38868.1"/>
    <property type="molecule type" value="Genomic_DNA"/>
</dbReference>
<dbReference type="SMR" id="O94201"/>
<dbReference type="VEuPathDB" id="FungiDB:C5_04810W_A"/>
<dbReference type="VEuPathDB" id="FungiDB:CAWG_04847"/>
<dbReference type="UniPathway" id="UPA00109">
    <property type="reaction ID" value="UER00182"/>
</dbReference>
<dbReference type="GO" id="GO:0005945">
    <property type="term" value="C:6-phosphofructokinase complex"/>
    <property type="evidence" value="ECO:0007669"/>
    <property type="project" value="EnsemblFungi"/>
</dbReference>
<dbReference type="GO" id="GO:0005739">
    <property type="term" value="C:mitochondrion"/>
    <property type="evidence" value="ECO:0007669"/>
    <property type="project" value="EnsemblFungi"/>
</dbReference>
<dbReference type="GO" id="GO:0003872">
    <property type="term" value="F:6-phosphofructokinase activity"/>
    <property type="evidence" value="ECO:0007669"/>
    <property type="project" value="UniProtKB-UniRule"/>
</dbReference>
<dbReference type="GO" id="GO:0016208">
    <property type="term" value="F:AMP binding"/>
    <property type="evidence" value="ECO:0007669"/>
    <property type="project" value="TreeGrafter"/>
</dbReference>
<dbReference type="GO" id="GO:0005524">
    <property type="term" value="F:ATP binding"/>
    <property type="evidence" value="ECO:0007669"/>
    <property type="project" value="UniProtKB-KW"/>
</dbReference>
<dbReference type="GO" id="GO:0070095">
    <property type="term" value="F:fructose-6-phosphate binding"/>
    <property type="evidence" value="ECO:0007669"/>
    <property type="project" value="TreeGrafter"/>
</dbReference>
<dbReference type="GO" id="GO:0042802">
    <property type="term" value="F:identical protein binding"/>
    <property type="evidence" value="ECO:0007669"/>
    <property type="project" value="TreeGrafter"/>
</dbReference>
<dbReference type="GO" id="GO:0046872">
    <property type="term" value="F:metal ion binding"/>
    <property type="evidence" value="ECO:0007669"/>
    <property type="project" value="UniProtKB-KW"/>
</dbReference>
<dbReference type="GO" id="GO:0048029">
    <property type="term" value="F:monosaccharide binding"/>
    <property type="evidence" value="ECO:0007669"/>
    <property type="project" value="TreeGrafter"/>
</dbReference>
<dbReference type="GO" id="GO:0046961">
    <property type="term" value="F:proton-transporting ATPase activity, rotational mechanism"/>
    <property type="evidence" value="ECO:0007669"/>
    <property type="project" value="EnsemblFungi"/>
</dbReference>
<dbReference type="GO" id="GO:0061621">
    <property type="term" value="P:canonical glycolysis"/>
    <property type="evidence" value="ECO:0007669"/>
    <property type="project" value="TreeGrafter"/>
</dbReference>
<dbReference type="GO" id="GO:0030388">
    <property type="term" value="P:fructose 1,6-bisphosphate metabolic process"/>
    <property type="evidence" value="ECO:0007669"/>
    <property type="project" value="TreeGrafter"/>
</dbReference>
<dbReference type="GO" id="GO:0006002">
    <property type="term" value="P:fructose 6-phosphate metabolic process"/>
    <property type="evidence" value="ECO:0007669"/>
    <property type="project" value="EnsemblFungi"/>
</dbReference>
<dbReference type="GO" id="GO:0051453">
    <property type="term" value="P:regulation of intracellular pH"/>
    <property type="evidence" value="ECO:0007669"/>
    <property type="project" value="EnsemblFungi"/>
</dbReference>
<dbReference type="FunFam" id="3.40.50.450:FF:000010">
    <property type="entry name" value="ATP-dependent 6-phosphofructokinase"/>
    <property type="match status" value="1"/>
</dbReference>
<dbReference type="FunFam" id="3.40.50.460:FF:000007">
    <property type="entry name" value="ATP-dependent 6-phosphofructokinase"/>
    <property type="match status" value="1"/>
</dbReference>
<dbReference type="FunFam" id="3.40.50.460:FF:000008">
    <property type="entry name" value="ATP-dependent 6-phosphofructokinase"/>
    <property type="match status" value="1"/>
</dbReference>
<dbReference type="Gene3D" id="3.10.180.90">
    <property type="match status" value="1"/>
</dbReference>
<dbReference type="Gene3D" id="3.40.50.450">
    <property type="match status" value="2"/>
</dbReference>
<dbReference type="Gene3D" id="3.40.50.460">
    <property type="entry name" value="Phosphofructokinase domain"/>
    <property type="match status" value="2"/>
</dbReference>
<dbReference type="HAMAP" id="MF_03184">
    <property type="entry name" value="Phosphofructokinase_I_E"/>
    <property type="match status" value="1"/>
</dbReference>
<dbReference type="InterPro" id="IPR009161">
    <property type="entry name" value="6-Pfructokinase_euk"/>
</dbReference>
<dbReference type="InterPro" id="IPR022953">
    <property type="entry name" value="ATP_PFK"/>
</dbReference>
<dbReference type="InterPro" id="IPR040712">
    <property type="entry name" value="Pfk_N"/>
</dbReference>
<dbReference type="InterPro" id="IPR015912">
    <property type="entry name" value="Phosphofructokinase_CS"/>
</dbReference>
<dbReference type="InterPro" id="IPR000023">
    <property type="entry name" value="Phosphofructokinase_dom"/>
</dbReference>
<dbReference type="InterPro" id="IPR035966">
    <property type="entry name" value="PKF_sf"/>
</dbReference>
<dbReference type="NCBIfam" id="TIGR02478">
    <property type="entry name" value="6PF1K_euk"/>
    <property type="match status" value="1"/>
</dbReference>
<dbReference type="PANTHER" id="PTHR13697:SF57">
    <property type="entry name" value="ATP-DEPENDENT 6-PHOSPHOFRUCTOKINASE SUBUNIT ALPHA"/>
    <property type="match status" value="1"/>
</dbReference>
<dbReference type="PANTHER" id="PTHR13697">
    <property type="entry name" value="PHOSPHOFRUCTOKINASE"/>
    <property type="match status" value="1"/>
</dbReference>
<dbReference type="Pfam" id="PF00365">
    <property type="entry name" value="PFK"/>
    <property type="match status" value="2"/>
</dbReference>
<dbReference type="Pfam" id="PF18468">
    <property type="entry name" value="Pfk_N"/>
    <property type="match status" value="1"/>
</dbReference>
<dbReference type="PIRSF" id="PIRSF000533">
    <property type="entry name" value="ATP_PFK_euk"/>
    <property type="match status" value="1"/>
</dbReference>
<dbReference type="PRINTS" id="PR00476">
    <property type="entry name" value="PHFRCTKINASE"/>
</dbReference>
<dbReference type="SUPFAM" id="SSF53784">
    <property type="entry name" value="Phosphofructokinase"/>
    <property type="match status" value="2"/>
</dbReference>
<dbReference type="PROSITE" id="PS00433">
    <property type="entry name" value="PHOSPHOFRUCTOKINASE"/>
    <property type="match status" value="2"/>
</dbReference>
<proteinExistence type="evidence at protein level"/>
<protein>
    <recommendedName>
        <fullName evidence="1">ATP-dependent 6-phosphofructokinase subunit alpha</fullName>
        <ecNumber evidence="1">2.7.1.11</ecNumber>
    </recommendedName>
    <alternativeName>
        <fullName evidence="1">ATP-dependent 6-phosphofructokinase 1</fullName>
        <shortName evidence="1">ATP-PFK 1</shortName>
        <shortName evidence="1">Phosphofructokinase 1</shortName>
    </alternativeName>
    <alternativeName>
        <fullName evidence="1">Phosphohexokinase 1</fullName>
    </alternativeName>
</protein>
<name>PFKA1_CANAX</name>
<comment type="function">
    <text>Catalyzes the phosphorylation of D-fructose 6-phosphate to fructose 1,6-bisphosphate by ATP, the first committing step of glycolysis.</text>
</comment>
<comment type="catalytic activity">
    <reaction evidence="1">
        <text>beta-D-fructose 6-phosphate + ATP = beta-D-fructose 1,6-bisphosphate + ADP + H(+)</text>
        <dbReference type="Rhea" id="RHEA:16109"/>
        <dbReference type="ChEBI" id="CHEBI:15378"/>
        <dbReference type="ChEBI" id="CHEBI:30616"/>
        <dbReference type="ChEBI" id="CHEBI:32966"/>
        <dbReference type="ChEBI" id="CHEBI:57634"/>
        <dbReference type="ChEBI" id="CHEBI:456216"/>
        <dbReference type="EC" id="2.7.1.11"/>
    </reaction>
</comment>
<comment type="cofactor">
    <cofactor evidence="1">
        <name>Mg(2+)</name>
        <dbReference type="ChEBI" id="CHEBI:18420"/>
    </cofactor>
</comment>
<comment type="activity regulation">
    <text evidence="1">Allosterically activated by ADP, AMP, or fructose 2,6-bisphosphate, and allosterically inhibited by ATP or citrate.</text>
</comment>
<comment type="pathway">
    <text evidence="1">Carbohydrate degradation; glycolysis; D-glyceraldehyde 3-phosphate and glycerone phosphate from D-glucose: step 3/4.</text>
</comment>
<comment type="subunit">
    <text evidence="1">Heterooctamer of 4 alpha and 4 beta chains.</text>
</comment>
<comment type="subcellular location">
    <subcellularLocation>
        <location evidence="1">Cytoplasm</location>
    </subcellularLocation>
</comment>
<comment type="similarity">
    <text evidence="1">Belongs to the phosphofructokinase type A (PFKA) family. ATP-dependent PFK group I subfamily. Eukaryotic two domain clade 'E' sub-subfamily.</text>
</comment>
<keyword id="KW-0021">Allosteric enzyme</keyword>
<keyword id="KW-0067">ATP-binding</keyword>
<keyword id="KW-0963">Cytoplasm</keyword>
<keyword id="KW-0324">Glycolysis</keyword>
<keyword id="KW-0418">Kinase</keyword>
<keyword id="KW-0460">Magnesium</keyword>
<keyword id="KW-0479">Metal-binding</keyword>
<keyword id="KW-0547">Nucleotide-binding</keyword>
<keyword id="KW-0808">Transferase</keyword>
<feature type="chain" id="PRO_0000112038" description="ATP-dependent 6-phosphofructokinase subunit alpha">
    <location>
        <begin position="1"/>
        <end position="987"/>
    </location>
</feature>
<feature type="region of interest" description="N-terminal catalytic PFK domain 1">
    <location>
        <begin position="1"/>
        <end position="602"/>
    </location>
</feature>
<feature type="region of interest" description="Interdomain linker">
    <location>
        <begin position="603"/>
        <end position="616"/>
    </location>
</feature>
<feature type="region of interest" description="C-terminal regulatory PFK domain 2">
    <location>
        <begin position="617"/>
        <end position="987"/>
    </location>
</feature>
<feature type="active site" description="Proton acceptor" evidence="1">
    <location>
        <position position="378"/>
    </location>
</feature>
<feature type="binding site" evidence="1">
    <location>
        <position position="237"/>
    </location>
    <ligand>
        <name>ATP</name>
        <dbReference type="ChEBI" id="CHEBI:30616"/>
    </ligand>
</feature>
<feature type="binding site" evidence="1">
    <location>
        <begin position="300"/>
        <end position="301"/>
    </location>
    <ligand>
        <name>ATP</name>
        <dbReference type="ChEBI" id="CHEBI:30616"/>
    </ligand>
</feature>
<feature type="binding site" evidence="1">
    <location>
        <begin position="330"/>
        <end position="333"/>
    </location>
    <ligand>
        <name>ATP</name>
        <dbReference type="ChEBI" id="CHEBI:30616"/>
    </ligand>
</feature>
<feature type="binding site" evidence="1">
    <location>
        <position position="331"/>
    </location>
    <ligand>
        <name>Mg(2+)</name>
        <dbReference type="ChEBI" id="CHEBI:18420"/>
        <note>catalytic</note>
    </ligand>
</feature>
<feature type="binding site" evidence="1">
    <location>
        <begin position="376"/>
        <end position="378"/>
    </location>
    <ligand>
        <name>beta-D-fructose 6-phosphate</name>
        <dbReference type="ChEBI" id="CHEBI:57634"/>
        <label>1</label>
        <note>ligand shared with subunit beta</note>
    </ligand>
</feature>
<feature type="binding site" evidence="1">
    <location>
        <position position="413"/>
    </location>
    <ligand>
        <name>beta-D-fructose 6-phosphate</name>
        <dbReference type="ChEBI" id="CHEBI:57634"/>
        <label>2</label>
        <note>ligand shared with subunit beta</note>
    </ligand>
</feature>
<feature type="binding site" evidence="1">
    <location>
        <begin position="420"/>
        <end position="422"/>
    </location>
    <ligand>
        <name>beta-D-fructose 6-phosphate</name>
        <dbReference type="ChEBI" id="CHEBI:57634"/>
        <label>1</label>
        <note>ligand shared with subunit beta</note>
    </ligand>
</feature>
<feature type="binding site" evidence="1">
    <location>
        <position position="477"/>
    </location>
    <ligand>
        <name>beta-D-fructose 6-phosphate</name>
        <dbReference type="ChEBI" id="CHEBI:57634"/>
        <label>1</label>
        <note>ligand shared with subunit beta</note>
    </ligand>
</feature>
<feature type="binding site" evidence="1">
    <location>
        <position position="504"/>
    </location>
    <ligand>
        <name>beta-D-fructose 6-phosphate</name>
        <dbReference type="ChEBI" id="CHEBI:57634"/>
        <label>2</label>
        <note>ligand shared with subunit beta</note>
    </ligand>
</feature>
<feature type="binding site" evidence="1">
    <location>
        <begin position="510"/>
        <end position="513"/>
    </location>
    <ligand>
        <name>beta-D-fructose 6-phosphate</name>
        <dbReference type="ChEBI" id="CHEBI:57634"/>
        <label>1</label>
        <note>ligand shared with subunit beta</note>
    </ligand>
</feature>
<feature type="binding site" evidence="1">
    <location>
        <position position="686"/>
    </location>
    <ligand>
        <name>beta-D-fructose 2,6-bisphosphate</name>
        <dbReference type="ChEBI" id="CHEBI:58579"/>
        <label>1</label>
        <note>allosteric activator; ligand shared with subunit beta</note>
    </ligand>
</feature>
<feature type="binding site" evidence="1">
    <location>
        <begin position="743"/>
        <end position="747"/>
    </location>
    <ligand>
        <name>beta-D-fructose 2,6-bisphosphate</name>
        <dbReference type="ChEBI" id="CHEBI:58579"/>
        <label>1</label>
        <note>allosteric activator; ligand shared with subunit beta</note>
    </ligand>
</feature>
<feature type="binding site" evidence="1">
    <location>
        <position position="781"/>
    </location>
    <ligand>
        <name>beta-D-fructose 2,6-bisphosphate</name>
        <dbReference type="ChEBI" id="CHEBI:58579"/>
        <label>2</label>
        <note>allosteric activator; ligand shared with subunit beta</note>
    </ligand>
</feature>
<feature type="binding site" evidence="1">
    <location>
        <begin position="788"/>
        <end position="790"/>
    </location>
    <ligand>
        <name>beta-D-fructose 2,6-bisphosphate</name>
        <dbReference type="ChEBI" id="CHEBI:58579"/>
        <label>1</label>
        <note>allosteric activator; ligand shared with subunit beta</note>
    </ligand>
</feature>
<feature type="binding site" evidence="1">
    <location>
        <position position="848"/>
    </location>
    <ligand>
        <name>beta-D-fructose 2,6-bisphosphate</name>
        <dbReference type="ChEBI" id="CHEBI:58579"/>
        <label>1</label>
        <note>allosteric activator; ligand shared with subunit beta</note>
    </ligand>
</feature>
<feature type="binding site" evidence="1">
    <location>
        <position position="874"/>
    </location>
    <ligand>
        <name>beta-D-fructose 2,6-bisphosphate</name>
        <dbReference type="ChEBI" id="CHEBI:58579"/>
        <label>2</label>
        <note>allosteric activator; ligand shared with subunit beta</note>
    </ligand>
</feature>
<feature type="binding site" evidence="1">
    <location>
        <begin position="880"/>
        <end position="883"/>
    </location>
    <ligand>
        <name>beta-D-fructose 2,6-bisphosphate</name>
        <dbReference type="ChEBI" id="CHEBI:58579"/>
        <label>1</label>
        <note>allosteric activator; ligand shared with subunit beta</note>
    </ligand>
</feature>
<feature type="binding site" evidence="1">
    <location>
        <position position="958"/>
    </location>
    <ligand>
        <name>beta-D-fructose 2,6-bisphosphate</name>
        <dbReference type="ChEBI" id="CHEBI:58579"/>
        <label>1</label>
        <note>allosteric activator; ligand shared with subunit beta</note>
    </ligand>
</feature>
<gene>
    <name type="primary">PFK1</name>
</gene>
<accession>O94201</accession>